<accession>K0E4E5</accession>
<comment type="function">
    <text evidence="2">Isopropyl malate synthase; part of the gene cluster that mediates the de novo generation of L-homotyrosine from acetyl-CoA and 4-hydroxyphenyl-pyruvate (PubMed:22998630). L-homotyrosine is a building block of echinocandin B, a fungal lipidated cyclic hexapeptide that acts as an antifungal agent (PubMed:22998630). L-homotyrosine 4-hydroxyphenyl-pyruvate first undergoes an aldol-type condensation by htyA with the C-2 of acetyl-CoA followed by the release of CoA to form 2-(4-hydroxybenzyl)-malate (PubMed:22998630). This is followed by isomerization of 2-(4-hydroxy-benzyl)-malate to 3-(4-hydroxybenzyl)-malate by htyD (PubMed:22998630). Thereafter, 3-(4-hydroxybenzyl)-malate undergoes decarboxylation and oxidation to form 2-oxo-4-(4-hydroxybenzyl)butanoic acid, coupled to reduction of NAD(+) to NADH by htyC (PubMed:22998630). The product then undergoes transamination catalyzed by htyB to form L-homotyrosine (PubMed:22998630).</text>
</comment>
<comment type="catalytic activity">
    <reaction evidence="5">
        <text>3-methyl-2-oxobutanoate + acetyl-CoA + H2O = (2S)-2-isopropylmalate + CoA + H(+)</text>
        <dbReference type="Rhea" id="RHEA:21524"/>
        <dbReference type="ChEBI" id="CHEBI:1178"/>
        <dbReference type="ChEBI" id="CHEBI:11851"/>
        <dbReference type="ChEBI" id="CHEBI:15377"/>
        <dbReference type="ChEBI" id="CHEBI:15378"/>
        <dbReference type="ChEBI" id="CHEBI:57287"/>
        <dbReference type="ChEBI" id="CHEBI:57288"/>
        <dbReference type="EC" id="2.3.3.13"/>
    </reaction>
</comment>
<comment type="pathway">
    <text evidence="2">Antifungal biosynthesis.</text>
</comment>
<comment type="disruption phenotype">
    <text evidence="2">Impairs the production of echinocandin B and the ability to inhibit the growth of C.albicans under screening conditions (PubMed:22998630).</text>
</comment>
<comment type="biotechnology">
    <text evidence="2">Due to their effectiveness as antifungal agents, echinocandin derivatives can be used for the treatment of human invasive candidiasis (PubMed:22998630).</text>
</comment>
<comment type="similarity">
    <text evidence="4">Belongs to the alpha-IPM synthase/homocitrate synthase family. LeuA type 2 subfamily.</text>
</comment>
<sequence length="584" mass="63714">MSTICAGGQTLESKYGGRAPPQIQLPDRQWPSKKLTESPIWLSTDLRDGNQALPNPMTTSQKWQMFRLLVDIGFKQIEVSFPCASDTEYTFTRALVETPGAVPDDVSLEVMTPCRKETLVRAVESLKGAKKAILFTYLATSDNYRETILQRSEAETLEHVRDCIEYARAITKEDPEARQTEWSLGFGMEDFANARPDAALRLAEVIQAAWQPSRENPVILGLASSVEAATVNIFADQVEYFSRHLSSRETVCISIHTHNDRGGAAAAAELACLAGGDRVEGCLFGNGERAGNLDLVTAAMNCFTQGMETGLDFSNLPEIRRVYESITQLPVHPRTPYSGDYYFRAFSGAHQDAIRKGLQKRAANSSKSPWKVPYLPLDPADLGVSFDNVIGVNSQSGKGGVAWLIQNGLALSIPTQLAASFSHVVKEQSVAQERGLAAEEICALFADRYDLRDSPSGRVVREHGYIAAFQHPGCALELEDVTEQAARAAGILTRGLDFLLRCTRAASHPLGGPDDSNLTVAFVQCAVTEKAEEAWGIGIGFSQDSAIDRALLSVMNRHYQPTPIRAPLATNDSVIPRPEPIRGG</sequence>
<evidence type="ECO:0000255" key="1">
    <source>
        <dbReference type="PROSITE-ProRule" id="PRU01151"/>
    </source>
</evidence>
<evidence type="ECO:0000269" key="2">
    <source>
    </source>
</evidence>
<evidence type="ECO:0000303" key="3">
    <source>
    </source>
</evidence>
<evidence type="ECO:0000305" key="4"/>
<evidence type="ECO:0000305" key="5">
    <source>
    </source>
</evidence>
<dbReference type="EC" id="2.3.3.13" evidence="5"/>
<dbReference type="EMBL" id="JX421685">
    <property type="protein sequence ID" value="AFT91393.1"/>
    <property type="molecule type" value="Genomic_DNA"/>
</dbReference>
<dbReference type="SMR" id="K0E4E5"/>
<dbReference type="BioCyc" id="MetaCyc:MONOMER-19234"/>
<dbReference type="GO" id="GO:0005739">
    <property type="term" value="C:mitochondrion"/>
    <property type="evidence" value="ECO:0007669"/>
    <property type="project" value="TreeGrafter"/>
</dbReference>
<dbReference type="GO" id="GO:0003852">
    <property type="term" value="F:2-isopropylmalate synthase activity"/>
    <property type="evidence" value="ECO:0007669"/>
    <property type="project" value="UniProtKB-EC"/>
</dbReference>
<dbReference type="GO" id="GO:0009098">
    <property type="term" value="P:L-leucine biosynthetic process"/>
    <property type="evidence" value="ECO:0007669"/>
    <property type="project" value="TreeGrafter"/>
</dbReference>
<dbReference type="Gene3D" id="3.30.160.270">
    <property type="match status" value="1"/>
</dbReference>
<dbReference type="Gene3D" id="3.20.20.70">
    <property type="entry name" value="Aldolase class I"/>
    <property type="match status" value="1"/>
</dbReference>
<dbReference type="InterPro" id="IPR002034">
    <property type="entry name" value="AIPM/Hcit_synth_CS"/>
</dbReference>
<dbReference type="InterPro" id="IPR013785">
    <property type="entry name" value="Aldolase_TIM"/>
</dbReference>
<dbReference type="InterPro" id="IPR054692">
    <property type="entry name" value="LeuA-like_post-cat"/>
</dbReference>
<dbReference type="InterPro" id="IPR036230">
    <property type="entry name" value="LeuA_allosteric_dom_sf"/>
</dbReference>
<dbReference type="InterPro" id="IPR000891">
    <property type="entry name" value="PYR_CT"/>
</dbReference>
<dbReference type="NCBIfam" id="NF002991">
    <property type="entry name" value="PRK03739.1"/>
    <property type="match status" value="1"/>
</dbReference>
<dbReference type="PANTHER" id="PTHR46911">
    <property type="match status" value="1"/>
</dbReference>
<dbReference type="PANTHER" id="PTHR46911:SF1">
    <property type="entry name" value="2-ISOPROPYLMALATE SYNTHASE"/>
    <property type="match status" value="1"/>
</dbReference>
<dbReference type="Pfam" id="PF00682">
    <property type="entry name" value="HMGL-like"/>
    <property type="match status" value="1"/>
</dbReference>
<dbReference type="Pfam" id="PF22615">
    <property type="entry name" value="IPMS_D2"/>
    <property type="match status" value="1"/>
</dbReference>
<dbReference type="SUPFAM" id="SSF51569">
    <property type="entry name" value="Aldolase"/>
    <property type="match status" value="1"/>
</dbReference>
<dbReference type="SUPFAM" id="SSF89000">
    <property type="entry name" value="post-HMGL domain-like"/>
    <property type="match status" value="1"/>
</dbReference>
<dbReference type="PROSITE" id="PS00815">
    <property type="entry name" value="AIPM_HOMOCIT_SYNTH_1"/>
    <property type="match status" value="1"/>
</dbReference>
<dbReference type="PROSITE" id="PS00816">
    <property type="entry name" value="AIPM_HOMOCIT_SYNTH_2"/>
    <property type="match status" value="1"/>
</dbReference>
<dbReference type="PROSITE" id="PS50991">
    <property type="entry name" value="PYR_CT"/>
    <property type="match status" value="1"/>
</dbReference>
<gene>
    <name evidence="3" type="primary">htyA</name>
</gene>
<organism>
    <name type="scientific">Aspergillus rugulosus</name>
    <name type="common">Emericella rugulosa</name>
    <dbReference type="NCBI Taxonomy" id="41736"/>
    <lineage>
        <taxon>Eukaryota</taxon>
        <taxon>Fungi</taxon>
        <taxon>Dikarya</taxon>
        <taxon>Ascomycota</taxon>
        <taxon>Pezizomycotina</taxon>
        <taxon>Eurotiomycetes</taxon>
        <taxon>Eurotiomycetidae</taxon>
        <taxon>Eurotiales</taxon>
        <taxon>Aspergillaceae</taxon>
        <taxon>Aspergillus</taxon>
        <taxon>Aspergillus subgen. Nidulantes</taxon>
    </lineage>
</organism>
<protein>
    <recommendedName>
        <fullName evidence="3">Isopropyl malate synthase htyA</fullName>
        <ecNumber evidence="5">2.3.3.13</ecNumber>
    </recommendedName>
    <alternativeName>
        <fullName evidence="3">L-homotyrosine biosynthetic cluster protein A</fullName>
    </alternativeName>
</protein>
<proteinExistence type="evidence at protein level"/>
<feature type="chain" id="PRO_0000443851" description="Isopropyl malate synthase htyA">
    <location>
        <begin position="1"/>
        <end position="584"/>
    </location>
</feature>
<feature type="domain" description="Pyruvate carboxyltransferase" evidence="1">
    <location>
        <begin position="39"/>
        <end position="317"/>
    </location>
</feature>
<reference key="1">
    <citation type="journal article" date="2012" name="J. Am. Chem. Soc.">
        <title>Identification and characterization of the echinocandin B biosynthetic gene cluster from Emericella rugulosa NRRL 11440.</title>
        <authorList>
            <person name="Cacho R.A."/>
            <person name="Jiang W."/>
            <person name="Chooi Y.H."/>
            <person name="Walsh C.T."/>
            <person name="Tang Y."/>
        </authorList>
    </citation>
    <scope>NUCLEOTIDE SEQUENCE [GENOMIC DNA]</scope>
    <scope>FUNCTION</scope>
    <scope>DISRUPTION PHENOTYPE</scope>
    <scope>PATHWAY</scope>
    <scope>BIOTECHNOLOGY</scope>
    <source>
        <strain>ATCC 58397 / NRRL 11440</strain>
    </source>
</reference>
<reference key="2">
    <citation type="journal article" date="2018" name="Appl. Environ. Microbiol.">
        <title>Cryptic production of trans-3-hydroxyproline in echinocandin B biosynthesis.</title>
        <authorList>
            <person name="Mattay J."/>
            <person name="Houwaart S."/>
            <person name="Huettel W."/>
        </authorList>
    </citation>
    <scope>FUNCTION</scope>
</reference>
<keyword id="KW-0808">Transferase</keyword>
<name>HTYA_ASPRU</name>